<name>RECU_LACLM</name>
<proteinExistence type="inferred from homology"/>
<keyword id="KW-0963">Cytoplasm</keyword>
<keyword id="KW-0227">DNA damage</keyword>
<keyword id="KW-0233">DNA recombination</keyword>
<keyword id="KW-0234">DNA repair</keyword>
<keyword id="KW-0255">Endonuclease</keyword>
<keyword id="KW-0378">Hydrolase</keyword>
<keyword id="KW-0460">Magnesium</keyword>
<keyword id="KW-0479">Metal-binding</keyword>
<keyword id="KW-0540">Nuclease</keyword>
<gene>
    <name evidence="1" type="primary">recU</name>
    <name type="ordered locus">llmg_0512</name>
</gene>
<evidence type="ECO:0000255" key="1">
    <source>
        <dbReference type="HAMAP-Rule" id="MF_00130"/>
    </source>
</evidence>
<feature type="chain" id="PRO_1000016730" description="Holliday junction resolvase RecU">
    <location>
        <begin position="1"/>
        <end position="213"/>
    </location>
</feature>
<feature type="binding site" evidence="1">
    <location>
        <position position="99"/>
    </location>
    <ligand>
        <name>Mg(2+)</name>
        <dbReference type="ChEBI" id="CHEBI:18420"/>
    </ligand>
</feature>
<feature type="binding site" evidence="1">
    <location>
        <position position="101"/>
    </location>
    <ligand>
        <name>Mg(2+)</name>
        <dbReference type="ChEBI" id="CHEBI:18420"/>
    </ligand>
</feature>
<feature type="binding site" evidence="1">
    <location>
        <position position="114"/>
    </location>
    <ligand>
        <name>Mg(2+)</name>
        <dbReference type="ChEBI" id="CHEBI:18420"/>
    </ligand>
</feature>
<feature type="binding site" evidence="1">
    <location>
        <position position="133"/>
    </location>
    <ligand>
        <name>Mg(2+)</name>
        <dbReference type="ChEBI" id="CHEBI:18420"/>
    </ligand>
</feature>
<feature type="site" description="Transition state stabilizer" evidence="1">
    <location>
        <position position="116"/>
    </location>
</feature>
<accession>A2RIM1</accession>
<reference key="1">
    <citation type="journal article" date="2007" name="J. Bacteriol.">
        <title>The complete genome sequence of the lactic acid bacterial paradigm Lactococcus lactis subsp. cremoris MG1363.</title>
        <authorList>
            <person name="Wegmann U."/>
            <person name="O'Connell-Motherway M."/>
            <person name="Zomer A."/>
            <person name="Buist G."/>
            <person name="Shearman C."/>
            <person name="Canchaya C."/>
            <person name="Ventura M."/>
            <person name="Goesmann A."/>
            <person name="Gasson M.J."/>
            <person name="Kuipers O.P."/>
            <person name="van Sinderen D."/>
            <person name="Kok J."/>
        </authorList>
    </citation>
    <scope>NUCLEOTIDE SEQUENCE [LARGE SCALE GENOMIC DNA]</scope>
    <source>
        <strain>MG1363</strain>
    </source>
</reference>
<dbReference type="EC" id="3.1.21.10" evidence="1"/>
<dbReference type="EMBL" id="AM406671">
    <property type="protein sequence ID" value="CAL97116.1"/>
    <property type="molecule type" value="Genomic_DNA"/>
</dbReference>
<dbReference type="RefSeq" id="WP_011834550.1">
    <property type="nucleotide sequence ID" value="NC_009004.1"/>
</dbReference>
<dbReference type="SMR" id="A2RIM1"/>
<dbReference type="STRING" id="416870.llmg_0512"/>
<dbReference type="KEGG" id="llm:llmg_0512"/>
<dbReference type="eggNOG" id="COG3331">
    <property type="taxonomic scope" value="Bacteria"/>
</dbReference>
<dbReference type="HOGENOM" id="CLU_096340_0_0_9"/>
<dbReference type="OrthoDB" id="9783592at2"/>
<dbReference type="PhylomeDB" id="A2RIM1"/>
<dbReference type="Proteomes" id="UP000000364">
    <property type="component" value="Chromosome"/>
</dbReference>
<dbReference type="GO" id="GO:0005737">
    <property type="term" value="C:cytoplasm"/>
    <property type="evidence" value="ECO:0007669"/>
    <property type="project" value="UniProtKB-SubCell"/>
</dbReference>
<dbReference type="GO" id="GO:0004519">
    <property type="term" value="F:endonuclease activity"/>
    <property type="evidence" value="ECO:0007669"/>
    <property type="project" value="UniProtKB-UniRule"/>
</dbReference>
<dbReference type="GO" id="GO:0000287">
    <property type="term" value="F:magnesium ion binding"/>
    <property type="evidence" value="ECO:0007669"/>
    <property type="project" value="UniProtKB-UniRule"/>
</dbReference>
<dbReference type="GO" id="GO:0003676">
    <property type="term" value="F:nucleic acid binding"/>
    <property type="evidence" value="ECO:0007669"/>
    <property type="project" value="InterPro"/>
</dbReference>
<dbReference type="GO" id="GO:0007059">
    <property type="term" value="P:chromosome segregation"/>
    <property type="evidence" value="ECO:0007669"/>
    <property type="project" value="UniProtKB-UniRule"/>
</dbReference>
<dbReference type="GO" id="GO:0006310">
    <property type="term" value="P:DNA recombination"/>
    <property type="evidence" value="ECO:0007669"/>
    <property type="project" value="UniProtKB-UniRule"/>
</dbReference>
<dbReference type="GO" id="GO:0006281">
    <property type="term" value="P:DNA repair"/>
    <property type="evidence" value="ECO:0007669"/>
    <property type="project" value="UniProtKB-UniRule"/>
</dbReference>
<dbReference type="CDD" id="cd22354">
    <property type="entry name" value="RecU-like"/>
    <property type="match status" value="1"/>
</dbReference>
<dbReference type="Gene3D" id="3.40.1350.10">
    <property type="match status" value="1"/>
</dbReference>
<dbReference type="HAMAP" id="MF_00130">
    <property type="entry name" value="RecU"/>
    <property type="match status" value="1"/>
</dbReference>
<dbReference type="InterPro" id="IPR004612">
    <property type="entry name" value="Resolv_RecU"/>
</dbReference>
<dbReference type="InterPro" id="IPR011335">
    <property type="entry name" value="Restrct_endonuc-II-like"/>
</dbReference>
<dbReference type="InterPro" id="IPR011856">
    <property type="entry name" value="tRNA_endonuc-like_dom_sf"/>
</dbReference>
<dbReference type="NCBIfam" id="NF002580">
    <property type="entry name" value="PRK02234.1-1"/>
    <property type="match status" value="1"/>
</dbReference>
<dbReference type="NCBIfam" id="NF002584">
    <property type="entry name" value="PRK02234.1-5"/>
    <property type="match status" value="1"/>
</dbReference>
<dbReference type="NCBIfam" id="TIGR00648">
    <property type="entry name" value="recU"/>
    <property type="match status" value="1"/>
</dbReference>
<dbReference type="Pfam" id="PF03838">
    <property type="entry name" value="RecU"/>
    <property type="match status" value="1"/>
</dbReference>
<dbReference type="PIRSF" id="PIRSF037785">
    <property type="entry name" value="RecU"/>
    <property type="match status" value="1"/>
</dbReference>
<dbReference type="SUPFAM" id="SSF52980">
    <property type="entry name" value="Restriction endonuclease-like"/>
    <property type="match status" value="1"/>
</dbReference>
<organism>
    <name type="scientific">Lactococcus lactis subsp. cremoris (strain MG1363)</name>
    <dbReference type="NCBI Taxonomy" id="416870"/>
    <lineage>
        <taxon>Bacteria</taxon>
        <taxon>Bacillati</taxon>
        <taxon>Bacillota</taxon>
        <taxon>Bacilli</taxon>
        <taxon>Lactobacillales</taxon>
        <taxon>Streptococcaceae</taxon>
        <taxon>Lactococcus</taxon>
        <taxon>Lactococcus cremoris subsp. cremoris</taxon>
    </lineage>
</organism>
<protein>
    <recommendedName>
        <fullName evidence="1">Holliday junction resolvase RecU</fullName>
        <ecNumber evidence="1">3.1.21.10</ecNumber>
    </recommendedName>
    <alternativeName>
        <fullName evidence="1">Recombination protein U homolog</fullName>
    </alternativeName>
</protein>
<sequence>MVNYPNGRSQSYSAVPKKQKTLTGLSVAKKGAPKSKSLVAFGKRGMNFEAEINATNDYYLSRGLAVIHKKPTPIQIVKVDYPQRSRAKITEAYFRQASTTDYSGVYKGHYVDFEAKETHQKTVFPLKNFHEHQIVHMSNVLAQRGIAFILLHFAALDETYLLPSSYLITFYYEKNGLKSIPLAYIRENGYKIETNHIPRIPYLEIVNKLCEVQ</sequence>
<comment type="function">
    <text evidence="1">Endonuclease that resolves Holliday junction intermediates in genetic recombination. Cleaves mobile four-strand junctions by introducing symmetrical nicks in paired strands. Promotes annealing of linear ssDNA with homologous dsDNA. Required for DNA repair, homologous recombination and chromosome segregation.</text>
</comment>
<comment type="catalytic activity">
    <reaction evidence="1">
        <text>Endonucleolytic cleavage at a junction such as a reciprocal single-stranded crossover between two homologous DNA duplexes (Holliday junction).</text>
        <dbReference type="EC" id="3.1.21.10"/>
    </reaction>
</comment>
<comment type="cofactor">
    <cofactor evidence="1">
        <name>Mg(2+)</name>
        <dbReference type="ChEBI" id="CHEBI:18420"/>
    </cofactor>
    <text evidence="1">Binds 1 Mg(2+) ion per subunit.</text>
</comment>
<comment type="subcellular location">
    <subcellularLocation>
        <location evidence="1">Cytoplasm</location>
    </subcellularLocation>
</comment>
<comment type="similarity">
    <text evidence="1">Belongs to the RecU family.</text>
</comment>